<accession>Q91687</accession>
<accession>Q06273</accession>
<keyword id="KW-0106">Calcium</keyword>
<keyword id="KW-0130">Cell adhesion</keyword>
<keyword id="KW-1015">Disulfide bond</keyword>
<keyword id="KW-0325">Glycoprotein</keyword>
<keyword id="KW-0401">Integrin</keyword>
<keyword id="KW-0472">Membrane</keyword>
<keyword id="KW-0479">Metal-binding</keyword>
<keyword id="KW-0675">Receptor</keyword>
<keyword id="KW-1185">Reference proteome</keyword>
<keyword id="KW-0677">Repeat</keyword>
<keyword id="KW-0732">Signal</keyword>
<keyword id="KW-0812">Transmembrane</keyword>
<keyword id="KW-1133">Transmembrane helix</keyword>
<dbReference type="EMBL" id="U54497">
    <property type="protein sequence ID" value="AAA98673.1"/>
    <property type="molecule type" value="mRNA"/>
</dbReference>
<dbReference type="EMBL" id="L10188">
    <property type="protein sequence ID" value="AAA16248.1"/>
    <property type="molecule type" value="mRNA"/>
</dbReference>
<dbReference type="PIR" id="I51526">
    <property type="entry name" value="I51526"/>
</dbReference>
<dbReference type="RefSeq" id="NP_001081444.1">
    <property type="nucleotide sequence ID" value="NM_001087975.1"/>
</dbReference>
<dbReference type="SMR" id="Q91687"/>
<dbReference type="GlyCosmos" id="Q91687">
    <property type="glycosylation" value="11 sites, No reported glycans"/>
</dbReference>
<dbReference type="GeneID" id="397839"/>
<dbReference type="KEGG" id="xla:397839"/>
<dbReference type="AGR" id="Xenbase:XB-GENE-960094"/>
<dbReference type="CTD" id="397839"/>
<dbReference type="Xenbase" id="XB-GENE-960094">
    <property type="gene designation" value="itga4.S"/>
</dbReference>
<dbReference type="OrthoDB" id="5317514at2759"/>
<dbReference type="Proteomes" id="UP000186698">
    <property type="component" value="Chromosome 9_10S"/>
</dbReference>
<dbReference type="Bgee" id="397839">
    <property type="expression patterns" value="Expressed in neurula embryo and 10 other cell types or tissues"/>
</dbReference>
<dbReference type="GO" id="GO:0009897">
    <property type="term" value="C:external side of plasma membrane"/>
    <property type="evidence" value="ECO:0000318"/>
    <property type="project" value="GO_Central"/>
</dbReference>
<dbReference type="GO" id="GO:0008305">
    <property type="term" value="C:integrin complex"/>
    <property type="evidence" value="ECO:0000318"/>
    <property type="project" value="GO_Central"/>
</dbReference>
<dbReference type="GO" id="GO:0005178">
    <property type="term" value="F:integrin binding"/>
    <property type="evidence" value="ECO:0000318"/>
    <property type="project" value="GO_Central"/>
</dbReference>
<dbReference type="GO" id="GO:0046872">
    <property type="term" value="F:metal ion binding"/>
    <property type="evidence" value="ECO:0007669"/>
    <property type="project" value="UniProtKB-KW"/>
</dbReference>
<dbReference type="GO" id="GO:0033627">
    <property type="term" value="P:cell adhesion mediated by integrin"/>
    <property type="evidence" value="ECO:0000318"/>
    <property type="project" value="GO_Central"/>
</dbReference>
<dbReference type="GO" id="GO:0098609">
    <property type="term" value="P:cell-cell adhesion"/>
    <property type="evidence" value="ECO:0000318"/>
    <property type="project" value="GO_Central"/>
</dbReference>
<dbReference type="GO" id="GO:0007160">
    <property type="term" value="P:cell-matrix adhesion"/>
    <property type="evidence" value="ECO:0007669"/>
    <property type="project" value="TreeGrafter"/>
</dbReference>
<dbReference type="GO" id="GO:0007229">
    <property type="term" value="P:integrin-mediated signaling pathway"/>
    <property type="evidence" value="ECO:0000318"/>
    <property type="project" value="GO_Central"/>
</dbReference>
<dbReference type="Gene3D" id="1.20.5.930">
    <property type="entry name" value="Bicelle-embedded integrin alpha(iib) transmembrane segment"/>
    <property type="match status" value="1"/>
</dbReference>
<dbReference type="Gene3D" id="2.130.10.130">
    <property type="entry name" value="Integrin alpha, N-terminal"/>
    <property type="match status" value="1"/>
</dbReference>
<dbReference type="Gene3D" id="2.60.40.1460">
    <property type="entry name" value="Integrin domains. Chain A, domain 2"/>
    <property type="match status" value="1"/>
</dbReference>
<dbReference type="Gene3D" id="2.60.40.1510">
    <property type="entry name" value="ntegrin, alpha v. Chain A, domain 3"/>
    <property type="match status" value="1"/>
</dbReference>
<dbReference type="Gene3D" id="2.60.40.1530">
    <property type="entry name" value="ntegrin, alpha v. Chain A, domain 4"/>
    <property type="match status" value="1"/>
</dbReference>
<dbReference type="InterPro" id="IPR013517">
    <property type="entry name" value="FG-GAP"/>
</dbReference>
<dbReference type="InterPro" id="IPR013519">
    <property type="entry name" value="Int_alpha_beta-p"/>
</dbReference>
<dbReference type="InterPro" id="IPR000413">
    <property type="entry name" value="Integrin_alpha"/>
</dbReference>
<dbReference type="InterPro" id="IPR018184">
    <property type="entry name" value="Integrin_alpha_C_CS"/>
</dbReference>
<dbReference type="InterPro" id="IPR013649">
    <property type="entry name" value="Integrin_alpha_Ig-like_1"/>
</dbReference>
<dbReference type="InterPro" id="IPR048285">
    <property type="entry name" value="Integrin_alpha_Ig-like_2"/>
</dbReference>
<dbReference type="InterPro" id="IPR048286">
    <property type="entry name" value="Integrin_alpha_Ig-like_3"/>
</dbReference>
<dbReference type="InterPro" id="IPR028994">
    <property type="entry name" value="Integrin_alpha_N"/>
</dbReference>
<dbReference type="InterPro" id="IPR032695">
    <property type="entry name" value="Integrin_dom_sf"/>
</dbReference>
<dbReference type="PANTHER" id="PTHR23220">
    <property type="entry name" value="INTEGRIN ALPHA"/>
    <property type="match status" value="1"/>
</dbReference>
<dbReference type="PANTHER" id="PTHR23220:SF78">
    <property type="entry name" value="INTEGRIN ALPHA-4"/>
    <property type="match status" value="1"/>
</dbReference>
<dbReference type="Pfam" id="PF01839">
    <property type="entry name" value="FG-GAP"/>
    <property type="match status" value="2"/>
</dbReference>
<dbReference type="Pfam" id="PF08441">
    <property type="entry name" value="Integrin_A_Ig_1"/>
    <property type="match status" value="1"/>
</dbReference>
<dbReference type="Pfam" id="PF20805">
    <property type="entry name" value="Integrin_A_Ig_2"/>
    <property type="match status" value="1"/>
</dbReference>
<dbReference type="Pfam" id="PF20806">
    <property type="entry name" value="Integrin_A_Ig_3"/>
    <property type="match status" value="1"/>
</dbReference>
<dbReference type="PRINTS" id="PR01185">
    <property type="entry name" value="INTEGRINA"/>
</dbReference>
<dbReference type="SMART" id="SM00191">
    <property type="entry name" value="Int_alpha"/>
    <property type="match status" value="5"/>
</dbReference>
<dbReference type="SUPFAM" id="SSF69318">
    <property type="entry name" value="Integrin alpha N-terminal domain"/>
    <property type="match status" value="1"/>
</dbReference>
<dbReference type="SUPFAM" id="SSF69179">
    <property type="entry name" value="Integrin domains"/>
    <property type="match status" value="3"/>
</dbReference>
<dbReference type="PROSITE" id="PS51470">
    <property type="entry name" value="FG_GAP"/>
    <property type="match status" value="7"/>
</dbReference>
<dbReference type="PROSITE" id="PS00242">
    <property type="entry name" value="INTEGRIN_ALPHA"/>
    <property type="match status" value="1"/>
</dbReference>
<feature type="signal peptide" evidence="3">
    <location>
        <begin position="1"/>
        <end position="34"/>
    </location>
</feature>
<feature type="chain" id="PRO_0000016246" description="Integrin alpha-4">
    <location>
        <begin position="35"/>
        <end position="1032"/>
    </location>
</feature>
<feature type="topological domain" description="Extracellular" evidence="3">
    <location>
        <begin position="35"/>
        <end position="974"/>
    </location>
</feature>
<feature type="transmembrane region" description="Helical" evidence="3">
    <location>
        <begin position="975"/>
        <end position="998"/>
    </location>
</feature>
<feature type="topological domain" description="Cytoplasmic" evidence="3">
    <location>
        <begin position="999"/>
        <end position="1032"/>
    </location>
</feature>
<feature type="repeat" description="FG-GAP 1" evidence="4">
    <location>
        <begin position="36"/>
        <end position="100"/>
    </location>
</feature>
<feature type="repeat" description="FG-GAP 2" evidence="4">
    <location>
        <begin position="113"/>
        <end position="177"/>
    </location>
</feature>
<feature type="repeat" description="FG-GAP 3" evidence="4">
    <location>
        <begin position="186"/>
        <end position="237"/>
    </location>
</feature>
<feature type="repeat" description="FG-GAP 4" evidence="4">
    <location>
        <begin position="238"/>
        <end position="291"/>
    </location>
</feature>
<feature type="repeat" description="FG-GAP 5" evidence="4">
    <location>
        <begin position="292"/>
        <end position="351"/>
    </location>
</feature>
<feature type="repeat" description="FG-GAP 6" evidence="4">
    <location>
        <begin position="353"/>
        <end position="411"/>
    </location>
</feature>
<feature type="repeat" description="FG-GAP 7" evidence="4">
    <location>
        <begin position="415"/>
        <end position="477"/>
    </location>
</feature>
<feature type="short sequence motif" description="GFFKR motif">
    <location>
        <begin position="1001"/>
        <end position="1005"/>
    </location>
</feature>
<feature type="binding site" evidence="2">
    <location>
        <position position="314"/>
    </location>
    <ligand>
        <name>Ca(2+)</name>
        <dbReference type="ChEBI" id="CHEBI:29108"/>
        <label>1</label>
    </ligand>
</feature>
<feature type="binding site" evidence="2">
    <location>
        <position position="316"/>
    </location>
    <ligand>
        <name>Ca(2+)</name>
        <dbReference type="ChEBI" id="CHEBI:29108"/>
        <label>1</label>
    </ligand>
</feature>
<feature type="binding site" evidence="2">
    <location>
        <position position="318"/>
    </location>
    <ligand>
        <name>Ca(2+)</name>
        <dbReference type="ChEBI" id="CHEBI:29108"/>
        <label>1</label>
    </ligand>
</feature>
<feature type="binding site" evidence="2">
    <location>
        <position position="320"/>
    </location>
    <ligand>
        <name>Ca(2+)</name>
        <dbReference type="ChEBI" id="CHEBI:29108"/>
        <label>1</label>
    </ligand>
</feature>
<feature type="binding site" evidence="2">
    <location>
        <position position="322"/>
    </location>
    <ligand>
        <name>Ca(2+)</name>
        <dbReference type="ChEBI" id="CHEBI:29108"/>
        <label>1</label>
    </ligand>
</feature>
<feature type="binding site" evidence="2">
    <location>
        <position position="376"/>
    </location>
    <ligand>
        <name>Ca(2+)</name>
        <dbReference type="ChEBI" id="CHEBI:29108"/>
        <label>2</label>
    </ligand>
</feature>
<feature type="binding site" evidence="2">
    <location>
        <position position="378"/>
    </location>
    <ligand>
        <name>Ca(2+)</name>
        <dbReference type="ChEBI" id="CHEBI:29108"/>
        <label>2</label>
    </ligand>
</feature>
<feature type="binding site" evidence="2">
    <location>
        <position position="380"/>
    </location>
    <ligand>
        <name>Ca(2+)</name>
        <dbReference type="ChEBI" id="CHEBI:29108"/>
        <label>2</label>
    </ligand>
</feature>
<feature type="binding site" evidence="2">
    <location>
        <position position="384"/>
    </location>
    <ligand>
        <name>Ca(2+)</name>
        <dbReference type="ChEBI" id="CHEBI:29108"/>
        <label>2</label>
    </ligand>
</feature>
<feature type="binding site" evidence="2">
    <location>
        <position position="438"/>
    </location>
    <ligand>
        <name>Ca(2+)</name>
        <dbReference type="ChEBI" id="CHEBI:29108"/>
        <label>3</label>
    </ligand>
</feature>
<feature type="binding site" evidence="2">
    <location>
        <position position="440"/>
    </location>
    <ligand>
        <name>Ca(2+)</name>
        <dbReference type="ChEBI" id="CHEBI:29108"/>
        <label>3</label>
    </ligand>
</feature>
<feature type="binding site" evidence="2">
    <location>
        <position position="442"/>
    </location>
    <ligand>
        <name>Ca(2+)</name>
        <dbReference type="ChEBI" id="CHEBI:29108"/>
        <label>3</label>
    </ligand>
</feature>
<feature type="binding site" evidence="2">
    <location>
        <position position="444"/>
    </location>
    <ligand>
        <name>Ca(2+)</name>
        <dbReference type="ChEBI" id="CHEBI:29108"/>
        <label>3</label>
    </ligand>
</feature>
<feature type="binding site" evidence="2">
    <location>
        <position position="446"/>
    </location>
    <ligand>
        <name>Ca(2+)</name>
        <dbReference type="ChEBI" id="CHEBI:29108"/>
        <label>3</label>
    </ligand>
</feature>
<feature type="site" description="Cleavage">
    <location>
        <begin position="590"/>
        <end position="591"/>
    </location>
</feature>
<feature type="glycosylation site" description="N-linked (GlcNAc...) asparagine" evidence="3">
    <location>
        <position position="81"/>
    </location>
</feature>
<feature type="glycosylation site" description="N-linked (GlcNAc...) asparagine" evidence="3">
    <location>
        <position position="98"/>
    </location>
</feature>
<feature type="glycosylation site" description="N-linked (GlcNAc...) asparagine" evidence="3">
    <location>
        <position position="229"/>
    </location>
</feature>
<feature type="glycosylation site" description="N-linked (GlcNAc...) asparagine" evidence="3">
    <location>
        <position position="479"/>
    </location>
</feature>
<feature type="glycosylation site" description="N-linked (GlcNAc...) asparagine" evidence="3">
    <location>
        <position position="496"/>
    </location>
</feature>
<feature type="glycosylation site" description="N-linked (GlcNAc...) asparagine" evidence="3">
    <location>
        <position position="517"/>
    </location>
</feature>
<feature type="glycosylation site" description="N-linked (GlcNAc...) asparagine" evidence="3">
    <location>
        <position position="537"/>
    </location>
</feature>
<feature type="glycosylation site" description="N-linked (GlcNAc...) asparagine" evidence="3">
    <location>
        <position position="626"/>
    </location>
</feature>
<feature type="glycosylation site" description="N-linked (GlcNAc...) asparagine" evidence="3">
    <location>
        <position position="660"/>
    </location>
</feature>
<feature type="glycosylation site" description="N-linked (GlcNAc...) asparagine" evidence="3">
    <location>
        <position position="746"/>
    </location>
</feature>
<feature type="glycosylation site" description="N-linked (GlcNAc...) asparagine" evidence="3">
    <location>
        <position position="857"/>
    </location>
</feature>
<feature type="disulfide bond" evidence="1">
    <location>
        <begin position="91"/>
        <end position="101"/>
    </location>
</feature>
<feature type="disulfide bond" evidence="1">
    <location>
        <begin position="144"/>
        <end position="165"/>
    </location>
</feature>
<feature type="disulfide bond" evidence="1">
    <location>
        <begin position="183"/>
        <end position="198"/>
    </location>
</feature>
<feature type="disulfide bond" evidence="1">
    <location>
        <begin position="485"/>
        <end position="494"/>
    </location>
</feature>
<feature type="disulfide bond" evidence="1">
    <location>
        <begin position="500"/>
        <end position="556"/>
    </location>
</feature>
<feature type="disulfide bond" evidence="1">
    <location>
        <begin position="622"/>
        <end position="627"/>
    </location>
</feature>
<feature type="disulfide bond" evidence="1">
    <location>
        <begin position="698"/>
        <end position="712"/>
    </location>
</feature>
<feature type="disulfide bond" evidence="1">
    <location>
        <begin position="853"/>
        <end position="889"/>
    </location>
</feature>
<feature type="disulfide bond" evidence="1">
    <location>
        <begin position="896"/>
        <end position="901"/>
    </location>
</feature>
<proteinExistence type="evidence at transcript level"/>
<comment type="function">
    <text>Fibronectin and V-CAM adhesion receptor.</text>
</comment>
<comment type="subunit">
    <text>Heterodimer of an alpha and a beta subunit.</text>
</comment>
<comment type="subcellular location">
    <subcellularLocation>
        <location>Membrane</location>
        <topology>Single-pass type I membrane protein</topology>
    </subcellularLocation>
</comment>
<comment type="similarity">
    <text evidence="5">Belongs to the integrin alpha chain family.</text>
</comment>
<gene>
    <name type="primary">itga4</name>
</gene>
<reference key="1">
    <citation type="journal article" date="1996" name="Development">
        <title>Integrin-dependent adhesive activity is spatially controlled by inductive signals at gastrulation.</title>
        <authorList>
            <person name="Ramos J.W."/>
            <person name="Whittaker C.A."/>
            <person name="Desimone D.W."/>
        </authorList>
    </citation>
    <scope>NUCLEOTIDE SEQUENCE [MRNA]</scope>
</reference>
<reference key="2">
    <citation type="journal article" date="1993" name="Development">
        <title>Integrin alpha subunit mRNAs are differentially expressed in early Xenopus embryos.</title>
        <authorList>
            <person name="Whittaker C.A."/>
            <person name="Desimone D.W."/>
        </authorList>
    </citation>
    <scope>NUCLEOTIDE SEQUENCE [MRNA] OF 308-379</scope>
</reference>
<name>ITA4_XENLA</name>
<sequence>MIRDLGKVGKVSLLLDHIWTGILLYTVILTPADCYNIDESSPMLFKGSPGSLFGFSVVLHSNGEGNWIVVGAPQSSWTTKNVSNPGAILKCKIQQNPNRTCDGLELGNQNGAKCGKTCKEEQDNQWLGVSLSRQPTKDGQILACGHRWKNTHFMLSDHKLPYGVCYGIPADFRTELSKRICPCYKDHVRKFGDRYGSCQAGISTFYVEDVIIMGAPGSFYWTGSIFVYNTTENTIKSYVDLNNAVKFGSYLGYSVGAGHFRTPNGYDVIGGAPQQEQTGRVYIFTYEEKQLTILFEAGGKKLGSYFGAAVCAADLNGDGLSDLLVGAPIQSTIREEGRVFVYMNTGSGAMEELKFELSGSDLYAARFGETIANLGDIDNDGFEDVAIAAPQEGDLEGAVYIYNGREKGITPSFSQRLQGSKFGYGLRMFGQSLSNVLDIDGNGYQDVAIGAFLSDSAVLLRTRPVIIIDAFLKLPSTVNKTKFECMENGVAVVCMNVTVCFAYQGLDVPGYIVMFYNITSDVRRKSGTPARFYFVSNGSSDVISGTVEIRQKSANCKTHQAFMRKDTRDIFTPIHMESSYYLGKHIVSKRSADDFQPLQPVLQQKEGKGNVITNKVYFARYCNLPNCSADLQITGKRSFPKPFESKTYLAVGGMKSLMINITLFNGGDDAFQTVLRLRLPKGLYFVKVFDLLEKEINCAVNKEENEQTRLDCSVGHFYVDAFSKQEFSFLLDSSALIRAEEDLVINATVACANELIQDTMWNNEVSFIVPTRYEIDLNVLGTVSPFSFVFGPREDKPDDSCIMEEIEYTFNVINAGSSLVPAAKLQISLPNTFAPNDIKLFNILAVKTTVGECYFDNSTRDCETPKNTRSKIGDLFAFFSRPDKRWLYCIKDDPSCLQILCLFGDMERESKATVEVQLEISHSHLERDEAMLIQFFTTAQAGFEDSFKIINLNQDHHAYVVLEALHNLKPKKHVIYMIIGISLLLGILLFSLLTYILWKVGFFRRKYQPIGTEETSRRESWNYLNKDEKEVK</sequence>
<protein>
    <recommendedName>
        <fullName>Integrin alpha-4</fullName>
    </recommendedName>
    <alternativeName>
        <fullName>Integrin alpha-IV</fullName>
    </alternativeName>
    <alternativeName>
        <fullName>VLA-4 subunit alpha</fullName>
    </alternativeName>
</protein>
<organism>
    <name type="scientific">Xenopus laevis</name>
    <name type="common">African clawed frog</name>
    <dbReference type="NCBI Taxonomy" id="8355"/>
    <lineage>
        <taxon>Eukaryota</taxon>
        <taxon>Metazoa</taxon>
        <taxon>Chordata</taxon>
        <taxon>Craniata</taxon>
        <taxon>Vertebrata</taxon>
        <taxon>Euteleostomi</taxon>
        <taxon>Amphibia</taxon>
        <taxon>Batrachia</taxon>
        <taxon>Anura</taxon>
        <taxon>Pipoidea</taxon>
        <taxon>Pipidae</taxon>
        <taxon>Xenopodinae</taxon>
        <taxon>Xenopus</taxon>
        <taxon>Xenopus</taxon>
    </lineage>
</organism>
<evidence type="ECO:0000250" key="1"/>
<evidence type="ECO:0000250" key="2">
    <source>
        <dbReference type="UniProtKB" id="P08648"/>
    </source>
</evidence>
<evidence type="ECO:0000255" key="3"/>
<evidence type="ECO:0000255" key="4">
    <source>
        <dbReference type="PROSITE-ProRule" id="PRU00803"/>
    </source>
</evidence>
<evidence type="ECO:0000305" key="5"/>